<gene>
    <name evidence="1" type="primary">rlmG</name>
    <name type="ordered locus">c3842</name>
</gene>
<proteinExistence type="inferred from homology"/>
<keyword id="KW-0963">Cytoplasm</keyword>
<keyword id="KW-0489">Methyltransferase</keyword>
<keyword id="KW-1185">Reference proteome</keyword>
<keyword id="KW-0698">rRNA processing</keyword>
<keyword id="KW-0949">S-adenosyl-L-methionine</keyword>
<keyword id="KW-0808">Transferase</keyword>
<name>RLMG_ECOL6</name>
<comment type="function">
    <text evidence="1">Specifically methylates the guanine in position 1835 (m2G1835) of 23S rRNA.</text>
</comment>
<comment type="catalytic activity">
    <reaction evidence="1">
        <text>guanosine(1835) in 23S rRNA + S-adenosyl-L-methionine = N(2)-methylguanosine(1835) in 23S rRNA + S-adenosyl-L-homocysteine + H(+)</text>
        <dbReference type="Rhea" id="RHEA:42744"/>
        <dbReference type="Rhea" id="RHEA-COMP:10217"/>
        <dbReference type="Rhea" id="RHEA-COMP:10218"/>
        <dbReference type="ChEBI" id="CHEBI:15378"/>
        <dbReference type="ChEBI" id="CHEBI:57856"/>
        <dbReference type="ChEBI" id="CHEBI:59789"/>
        <dbReference type="ChEBI" id="CHEBI:74269"/>
        <dbReference type="ChEBI" id="CHEBI:74481"/>
        <dbReference type="EC" id="2.1.1.174"/>
    </reaction>
</comment>
<comment type="subcellular location">
    <subcellularLocation>
        <location evidence="1">Cytoplasm</location>
    </subcellularLocation>
</comment>
<comment type="similarity">
    <text evidence="1">Belongs to the methyltransferase superfamily. RlmG family.</text>
</comment>
<protein>
    <recommendedName>
        <fullName evidence="1">Ribosomal RNA large subunit methyltransferase G</fullName>
        <ecNumber evidence="1">2.1.1.174</ecNumber>
    </recommendedName>
    <alternativeName>
        <fullName evidence="1">23S rRNA m2G1835 methyltransferase</fullName>
    </alternativeName>
    <alternativeName>
        <fullName evidence="1">rRNA (guanine-N(2)-)-methyltransferase RlmG</fullName>
    </alternativeName>
</protein>
<feature type="chain" id="PRO_0000366463" description="Ribosomal RNA large subunit methyltransferase G">
    <location>
        <begin position="1"/>
        <end position="378"/>
    </location>
</feature>
<organism>
    <name type="scientific">Escherichia coli O6:H1 (strain CFT073 / ATCC 700928 / UPEC)</name>
    <dbReference type="NCBI Taxonomy" id="199310"/>
    <lineage>
        <taxon>Bacteria</taxon>
        <taxon>Pseudomonadati</taxon>
        <taxon>Pseudomonadota</taxon>
        <taxon>Gammaproteobacteria</taxon>
        <taxon>Enterobacterales</taxon>
        <taxon>Enterobacteriaceae</taxon>
        <taxon>Escherichia</taxon>
    </lineage>
</organism>
<accession>Q8FDE5</accession>
<sequence length="378" mass="42310">MSHLDNGFRSLTLQRFPATDDVNPLQAWEAADEYLLQQLDDTEIRGPVLILNDAFGALSCALAEHKPYSIGDSYISELATRENLRLNGIDESSVKFLDSTADYPQQPGVVLIKVPKTLALLEQQLRALRKVVTPDTRIIAGAKARDIHTSTLELFEKVLGPTTTTLAWKKARLINCTFNEPPLADAPQTVSWKLEGTDWTIHNHANVFSRTGLDIGARFFMQHLPENLEGEIVDLGCGNGVIGLTLLDKNPQAKVVFVDESPMAVASSRLNVETNMPEALDRCEFMINNALSGVEPFRFNAVLCNPPFHQQHALTDNVAWEMFHHARRCLKINGELYIVANRHLDYFHKLKKIFGNCTTIATNNKFVVLKAVKLGRRR</sequence>
<dbReference type="EC" id="2.1.1.174" evidence="1"/>
<dbReference type="EMBL" id="AE014075">
    <property type="protein sequence ID" value="AAN82287.1"/>
    <property type="molecule type" value="Genomic_DNA"/>
</dbReference>
<dbReference type="RefSeq" id="WP_000018671.1">
    <property type="nucleotide sequence ID" value="NZ_CP051263.1"/>
</dbReference>
<dbReference type="SMR" id="Q8FDE5"/>
<dbReference type="STRING" id="199310.c3842"/>
<dbReference type="GeneID" id="86947959"/>
<dbReference type="KEGG" id="ecc:c3842"/>
<dbReference type="eggNOG" id="COG2813">
    <property type="taxonomic scope" value="Bacteria"/>
</dbReference>
<dbReference type="HOGENOM" id="CLU_040288_4_0_6"/>
<dbReference type="BioCyc" id="ECOL199310:C3842-MONOMER"/>
<dbReference type="Proteomes" id="UP000001410">
    <property type="component" value="Chromosome"/>
</dbReference>
<dbReference type="GO" id="GO:0005737">
    <property type="term" value="C:cytoplasm"/>
    <property type="evidence" value="ECO:0007669"/>
    <property type="project" value="UniProtKB-SubCell"/>
</dbReference>
<dbReference type="GO" id="GO:0052916">
    <property type="term" value="F:23S rRNA (guanine(1835)-N(2))-methyltransferase activity"/>
    <property type="evidence" value="ECO:0007669"/>
    <property type="project" value="UniProtKB-EC"/>
</dbReference>
<dbReference type="GO" id="GO:0003676">
    <property type="term" value="F:nucleic acid binding"/>
    <property type="evidence" value="ECO:0007669"/>
    <property type="project" value="InterPro"/>
</dbReference>
<dbReference type="CDD" id="cd02440">
    <property type="entry name" value="AdoMet_MTases"/>
    <property type="match status" value="1"/>
</dbReference>
<dbReference type="FunFam" id="3.40.50.150:FF:000046">
    <property type="entry name" value="Ribosomal RNA large subunit methyltransferase G"/>
    <property type="match status" value="1"/>
</dbReference>
<dbReference type="FunFam" id="3.40.50.150:FF:000047">
    <property type="entry name" value="Ribosomal RNA large subunit methyltransferase G"/>
    <property type="match status" value="1"/>
</dbReference>
<dbReference type="Gene3D" id="3.40.50.150">
    <property type="entry name" value="Vaccinia Virus protein VP39"/>
    <property type="match status" value="2"/>
</dbReference>
<dbReference type="HAMAP" id="MF_01859">
    <property type="entry name" value="23SrRNA_methyltr_G"/>
    <property type="match status" value="1"/>
</dbReference>
<dbReference type="InterPro" id="IPR002052">
    <property type="entry name" value="DNA_methylase_N6_adenine_CS"/>
</dbReference>
<dbReference type="InterPro" id="IPR017237">
    <property type="entry name" value="rRNA_m2G-MeTrfase_RlmG"/>
</dbReference>
<dbReference type="InterPro" id="IPR046977">
    <property type="entry name" value="RsmC/RlmG"/>
</dbReference>
<dbReference type="InterPro" id="IPR029063">
    <property type="entry name" value="SAM-dependent_MTases_sf"/>
</dbReference>
<dbReference type="InterPro" id="IPR007848">
    <property type="entry name" value="Small_mtfrase_dom"/>
</dbReference>
<dbReference type="NCBIfam" id="NF011577">
    <property type="entry name" value="PRK15001.1"/>
    <property type="match status" value="1"/>
</dbReference>
<dbReference type="PANTHER" id="PTHR47816:SF5">
    <property type="entry name" value="RIBOSOMAL RNA LARGE SUBUNIT METHYLTRANSFERASE G"/>
    <property type="match status" value="1"/>
</dbReference>
<dbReference type="PANTHER" id="PTHR47816">
    <property type="entry name" value="RIBOSOMAL RNA SMALL SUBUNIT METHYLTRANSFERASE C"/>
    <property type="match status" value="1"/>
</dbReference>
<dbReference type="Pfam" id="PF05175">
    <property type="entry name" value="MTS"/>
    <property type="match status" value="1"/>
</dbReference>
<dbReference type="PIRSF" id="PIRSF037565">
    <property type="entry name" value="RRNA_m2G_Mtase_RsmD_prd"/>
    <property type="match status" value="1"/>
</dbReference>
<dbReference type="SUPFAM" id="SSF53335">
    <property type="entry name" value="S-adenosyl-L-methionine-dependent methyltransferases"/>
    <property type="match status" value="1"/>
</dbReference>
<evidence type="ECO:0000255" key="1">
    <source>
        <dbReference type="HAMAP-Rule" id="MF_01859"/>
    </source>
</evidence>
<reference key="1">
    <citation type="journal article" date="2002" name="Proc. Natl. Acad. Sci. U.S.A.">
        <title>Extensive mosaic structure revealed by the complete genome sequence of uropathogenic Escherichia coli.</title>
        <authorList>
            <person name="Welch R.A."/>
            <person name="Burland V."/>
            <person name="Plunkett G. III"/>
            <person name="Redford P."/>
            <person name="Roesch P."/>
            <person name="Rasko D."/>
            <person name="Buckles E.L."/>
            <person name="Liou S.-R."/>
            <person name="Boutin A."/>
            <person name="Hackett J."/>
            <person name="Stroud D."/>
            <person name="Mayhew G.F."/>
            <person name="Rose D.J."/>
            <person name="Zhou S."/>
            <person name="Schwartz D.C."/>
            <person name="Perna N.T."/>
            <person name="Mobley H.L.T."/>
            <person name="Donnenberg M.S."/>
            <person name="Blattner F.R."/>
        </authorList>
    </citation>
    <scope>NUCLEOTIDE SEQUENCE [LARGE SCALE GENOMIC DNA]</scope>
    <source>
        <strain>CFT073 / ATCC 700928 / UPEC</strain>
    </source>
</reference>